<keyword id="KW-0007">Acetylation</keyword>
<keyword id="KW-0903">Direct protein sequencing</keyword>
<keyword id="KW-0317">Glutathione biosynthesis</keyword>
<keyword id="KW-0597">Phosphoprotein</keyword>
<keyword id="KW-1185">Reference proteome</keyword>
<sequence length="274" mass="30548">MGTDSRAAGALLARASTLHLQTGNLLNWGRLRKKCPSTHSEELRDCIQKTLNEWSSQISPDLVREFPDVLECTMSHAVEKINPDEREEMKVSAKLFIVGSNSSSSTRNAVDMACSVLGVAQLDSVIMASPPIEDGVNLSLEHLQPYWEELENLVQSKKIVAIGTSDLDKTQLEQLYQWAQVKPNSNQVNLASCCVMPPDLTAFAKQFDIQLLTHNDPKELLSEASFQEALQESIPDIEAQEWVPLWLLRYSVIVKSRGIIKSKGYILQAKRKGS</sequence>
<protein>
    <recommendedName>
        <fullName>Glutamate--cysteine ligase regulatory subunit</fullName>
    </recommendedName>
    <alternativeName>
        <fullName>GCS light chain</fullName>
    </alternativeName>
    <alternativeName>
        <fullName>Gamma-ECS regulatory subunit</fullName>
    </alternativeName>
    <alternativeName>
        <fullName>Gamma-glutamylcysteine synthetase regulatory subunit</fullName>
    </alternativeName>
    <alternativeName>
        <fullName>Glutamate--cysteine ligase modifier subunit</fullName>
    </alternativeName>
</protein>
<organism>
    <name type="scientific">Rattus norvegicus</name>
    <name type="common">Rat</name>
    <dbReference type="NCBI Taxonomy" id="10116"/>
    <lineage>
        <taxon>Eukaryota</taxon>
        <taxon>Metazoa</taxon>
        <taxon>Chordata</taxon>
        <taxon>Craniata</taxon>
        <taxon>Vertebrata</taxon>
        <taxon>Euteleostomi</taxon>
        <taxon>Mammalia</taxon>
        <taxon>Eutheria</taxon>
        <taxon>Euarchontoglires</taxon>
        <taxon>Glires</taxon>
        <taxon>Rodentia</taxon>
        <taxon>Myomorpha</taxon>
        <taxon>Muroidea</taxon>
        <taxon>Muridae</taxon>
        <taxon>Murinae</taxon>
        <taxon>Rattus</taxon>
    </lineage>
</organism>
<dbReference type="EMBL" id="S65555">
    <property type="protein sequence ID" value="AAB28225.1"/>
    <property type="molecule type" value="mRNA"/>
</dbReference>
<dbReference type="EMBL" id="L22191">
    <property type="protein sequence ID" value="AAA41543.1"/>
    <property type="molecule type" value="mRNA"/>
</dbReference>
<dbReference type="EMBL" id="BC078867">
    <property type="protein sequence ID" value="AAH78867.1"/>
    <property type="molecule type" value="mRNA"/>
</dbReference>
<dbReference type="PIR" id="A48019">
    <property type="entry name" value="A48019"/>
</dbReference>
<dbReference type="RefSeq" id="NP_059001.1">
    <property type="nucleotide sequence ID" value="NM_017305.2"/>
</dbReference>
<dbReference type="SMR" id="P48508"/>
<dbReference type="BioGRID" id="248351">
    <property type="interactions" value="1"/>
</dbReference>
<dbReference type="CORUM" id="P48508"/>
<dbReference type="FunCoup" id="P48508">
    <property type="interactions" value="2350"/>
</dbReference>
<dbReference type="STRING" id="10116.ENSRNOP00000018343"/>
<dbReference type="iPTMnet" id="P48508"/>
<dbReference type="PhosphoSitePlus" id="P48508"/>
<dbReference type="jPOST" id="P48508"/>
<dbReference type="PaxDb" id="10116-ENSRNOP00000018343"/>
<dbReference type="Ensembl" id="ENSRNOT00000018343.5">
    <property type="protein sequence ID" value="ENSRNOP00000018343.3"/>
    <property type="gene ID" value="ENSRNOG00000013409.5"/>
</dbReference>
<dbReference type="GeneID" id="29739"/>
<dbReference type="KEGG" id="rno:29739"/>
<dbReference type="UCSC" id="RGD:619871">
    <property type="organism name" value="rat"/>
</dbReference>
<dbReference type="AGR" id="RGD:619871"/>
<dbReference type="CTD" id="2730"/>
<dbReference type="RGD" id="619871">
    <property type="gene designation" value="Gclm"/>
</dbReference>
<dbReference type="eggNOG" id="KOG3023">
    <property type="taxonomic scope" value="Eukaryota"/>
</dbReference>
<dbReference type="GeneTree" id="ENSGT00510000047658"/>
<dbReference type="HOGENOM" id="CLU_055657_1_0_1"/>
<dbReference type="InParanoid" id="P48508"/>
<dbReference type="OMA" id="AHEWIPL"/>
<dbReference type="OrthoDB" id="5596051at2759"/>
<dbReference type="PhylomeDB" id="P48508"/>
<dbReference type="TreeFam" id="TF105986"/>
<dbReference type="BioCyc" id="MetaCyc:MONOMER-10025"/>
<dbReference type="BRENDA" id="6.3.2.2">
    <property type="organism ID" value="5301"/>
</dbReference>
<dbReference type="Reactome" id="R-RNO-174403">
    <property type="pathway name" value="Glutathione synthesis and recycling"/>
</dbReference>
<dbReference type="SABIO-RK" id="P48508"/>
<dbReference type="UniPathway" id="UPA00142">
    <property type="reaction ID" value="UER00209"/>
</dbReference>
<dbReference type="PRO" id="PR:P48508"/>
<dbReference type="Proteomes" id="UP000002494">
    <property type="component" value="Chromosome 2"/>
</dbReference>
<dbReference type="Bgee" id="ENSRNOG00000013409">
    <property type="expression patterns" value="Expressed in kidney and 20 other cell types or tissues"/>
</dbReference>
<dbReference type="GO" id="GO:0017109">
    <property type="term" value="C:glutamate-cysteine ligase complex"/>
    <property type="evidence" value="ECO:0000314"/>
    <property type="project" value="RGD"/>
</dbReference>
<dbReference type="GO" id="GO:0004357">
    <property type="term" value="F:glutamate-cysteine ligase activity"/>
    <property type="evidence" value="ECO:0000314"/>
    <property type="project" value="RGD"/>
</dbReference>
<dbReference type="GO" id="GO:0035226">
    <property type="term" value="F:glutamate-cysteine ligase catalytic subunit binding"/>
    <property type="evidence" value="ECO:0000314"/>
    <property type="project" value="RGD"/>
</dbReference>
<dbReference type="GO" id="GO:1990609">
    <property type="term" value="F:glutamate-cysteine ligase regulator activity"/>
    <property type="evidence" value="ECO:0000318"/>
    <property type="project" value="GO_Central"/>
</dbReference>
<dbReference type="GO" id="GO:0044877">
    <property type="term" value="F:protein-containing complex binding"/>
    <property type="evidence" value="ECO:0000314"/>
    <property type="project" value="RGD"/>
</dbReference>
<dbReference type="GO" id="GO:0008637">
    <property type="term" value="P:apoptotic mitochondrial changes"/>
    <property type="evidence" value="ECO:0000266"/>
    <property type="project" value="RGD"/>
</dbReference>
<dbReference type="GO" id="GO:0097746">
    <property type="term" value="P:blood vessel diameter maintenance"/>
    <property type="evidence" value="ECO:0000250"/>
    <property type="project" value="UniProtKB"/>
</dbReference>
<dbReference type="GO" id="GO:0044344">
    <property type="term" value="P:cellular response to fibroblast growth factor stimulus"/>
    <property type="evidence" value="ECO:0000270"/>
    <property type="project" value="RGD"/>
</dbReference>
<dbReference type="GO" id="GO:0071372">
    <property type="term" value="P:cellular response to follicle-stimulating hormone stimulus"/>
    <property type="evidence" value="ECO:0000270"/>
    <property type="project" value="RGD"/>
</dbReference>
<dbReference type="GO" id="GO:0071333">
    <property type="term" value="P:cellular response to glucose stimulus"/>
    <property type="evidence" value="ECO:0000270"/>
    <property type="project" value="RGD"/>
</dbReference>
<dbReference type="GO" id="GO:0035729">
    <property type="term" value="P:cellular response to hepatocyte growth factor stimulus"/>
    <property type="evidence" value="ECO:0000270"/>
    <property type="project" value="RGD"/>
</dbReference>
<dbReference type="GO" id="GO:1990830">
    <property type="term" value="P:cellular response to leukemia inhibitory factor"/>
    <property type="evidence" value="ECO:0000266"/>
    <property type="project" value="RGD"/>
</dbReference>
<dbReference type="GO" id="GO:0097069">
    <property type="term" value="P:cellular response to thyroxine stimulus"/>
    <property type="evidence" value="ECO:0000270"/>
    <property type="project" value="RGD"/>
</dbReference>
<dbReference type="GO" id="GO:0006534">
    <property type="term" value="P:cysteine metabolic process"/>
    <property type="evidence" value="ECO:0000266"/>
    <property type="project" value="RGD"/>
</dbReference>
<dbReference type="GO" id="GO:0006536">
    <property type="term" value="P:glutamate metabolic process"/>
    <property type="evidence" value="ECO:0000250"/>
    <property type="project" value="UniProtKB"/>
</dbReference>
<dbReference type="GO" id="GO:0006750">
    <property type="term" value="P:glutathione biosynthetic process"/>
    <property type="evidence" value="ECO:0000315"/>
    <property type="project" value="RGD"/>
</dbReference>
<dbReference type="GO" id="GO:0006749">
    <property type="term" value="P:glutathione metabolic process"/>
    <property type="evidence" value="ECO:0000266"/>
    <property type="project" value="RGD"/>
</dbReference>
<dbReference type="GO" id="GO:0035733">
    <property type="term" value="P:hepatic stellate cell activation"/>
    <property type="evidence" value="ECO:0000270"/>
    <property type="project" value="RGD"/>
</dbReference>
<dbReference type="GO" id="GO:2001237">
    <property type="term" value="P:negative regulation of extrinsic apoptotic signaling pathway"/>
    <property type="evidence" value="ECO:0000266"/>
    <property type="project" value="RGD"/>
</dbReference>
<dbReference type="GO" id="GO:0043524">
    <property type="term" value="P:negative regulation of neuron apoptotic process"/>
    <property type="evidence" value="ECO:0000315"/>
    <property type="project" value="RGD"/>
</dbReference>
<dbReference type="GO" id="GO:0051900">
    <property type="term" value="P:regulation of mitochondrial depolarization"/>
    <property type="evidence" value="ECO:0000266"/>
    <property type="project" value="RGD"/>
</dbReference>
<dbReference type="GO" id="GO:0014823">
    <property type="term" value="P:response to activity"/>
    <property type="evidence" value="ECO:0000270"/>
    <property type="project" value="RGD"/>
</dbReference>
<dbReference type="GO" id="GO:0044752">
    <property type="term" value="P:response to human chorionic gonadotropin"/>
    <property type="evidence" value="ECO:0000270"/>
    <property type="project" value="RGD"/>
</dbReference>
<dbReference type="GO" id="GO:0051409">
    <property type="term" value="P:response to nitrosative stress"/>
    <property type="evidence" value="ECO:0000315"/>
    <property type="project" value="RGD"/>
</dbReference>
<dbReference type="GO" id="GO:0007584">
    <property type="term" value="P:response to nutrient"/>
    <property type="evidence" value="ECO:0000270"/>
    <property type="project" value="RGD"/>
</dbReference>
<dbReference type="GO" id="GO:0006979">
    <property type="term" value="P:response to oxidative stress"/>
    <property type="evidence" value="ECO:0000315"/>
    <property type="project" value="RGD"/>
</dbReference>
<dbReference type="GO" id="GO:0009410">
    <property type="term" value="P:response to xenobiotic stimulus"/>
    <property type="evidence" value="ECO:0000250"/>
    <property type="project" value="UniProtKB"/>
</dbReference>
<dbReference type="FunFam" id="3.20.20.100:FF:000012">
    <property type="entry name" value="Glutamate--cysteine ligase regulatory subunit"/>
    <property type="match status" value="1"/>
</dbReference>
<dbReference type="Gene3D" id="3.20.20.100">
    <property type="entry name" value="NADP-dependent oxidoreductase domain"/>
    <property type="match status" value="1"/>
</dbReference>
<dbReference type="InterPro" id="IPR032963">
    <property type="entry name" value="Gclm"/>
</dbReference>
<dbReference type="InterPro" id="IPR023210">
    <property type="entry name" value="NADP_OxRdtase_dom"/>
</dbReference>
<dbReference type="InterPro" id="IPR036812">
    <property type="entry name" value="NADP_OxRdtase_dom_sf"/>
</dbReference>
<dbReference type="PANTHER" id="PTHR13295">
    <property type="entry name" value="GLUTAMATE CYSTEINE LIGASE REGULATORY SUBUNIT"/>
    <property type="match status" value="1"/>
</dbReference>
<dbReference type="PANTHER" id="PTHR13295:SF4">
    <property type="entry name" value="GLUTAMATE--CYSTEINE LIGASE REGULATORY SUBUNIT"/>
    <property type="match status" value="1"/>
</dbReference>
<dbReference type="Pfam" id="PF00248">
    <property type="entry name" value="Aldo_ket_red"/>
    <property type="match status" value="1"/>
</dbReference>
<dbReference type="SUPFAM" id="SSF51430">
    <property type="entry name" value="NAD(P)-linked oxidoreductase"/>
    <property type="match status" value="1"/>
</dbReference>
<proteinExistence type="evidence at protein level"/>
<feature type="chain" id="PRO_0000192575" description="Glutamate--cysteine ligase regulatory subunit">
    <location>
        <begin position="1"/>
        <end position="274"/>
    </location>
</feature>
<feature type="modified residue" description="Phosphoserine" evidence="3">
    <location>
        <position position="59"/>
    </location>
</feature>
<feature type="modified residue" description="N6-acetyllysine" evidence="1">
    <location>
        <position position="263"/>
    </location>
</feature>
<reference key="1">
    <citation type="journal article" date="1993" name="J. Biol. Chem.">
        <title>Amino acid sequence and function of the light subunit of rat kidney gamma-glutamylcysteine synthetase.</title>
        <authorList>
            <person name="Huang C.-S."/>
            <person name="Anderson M.E."/>
            <person name="Meister A."/>
        </authorList>
    </citation>
    <scope>NUCLEOTIDE SEQUENCE [MRNA]</scope>
    <scope>PROTEIN SEQUENCE OF 139-156 AND 219-241</scope>
    <source>
        <tissue>Kidney</tissue>
    </source>
</reference>
<reference key="2">
    <citation type="journal article" date="2004" name="Genome Res.">
        <title>The status, quality, and expansion of the NIH full-length cDNA project: the Mammalian Gene Collection (MGC).</title>
        <authorList>
            <consortium name="The MGC Project Team"/>
        </authorList>
    </citation>
    <scope>NUCLEOTIDE SEQUENCE [LARGE SCALE MRNA]</scope>
    <source>
        <tissue>Kidney</tissue>
    </source>
</reference>
<reference key="3">
    <citation type="journal article" date="2012" name="Nat. Commun.">
        <title>Quantitative maps of protein phosphorylation sites across 14 different rat organs and tissues.</title>
        <authorList>
            <person name="Lundby A."/>
            <person name="Secher A."/>
            <person name="Lage K."/>
            <person name="Nordsborg N.B."/>
            <person name="Dmytriyev A."/>
            <person name="Lundby C."/>
            <person name="Olsen J.V."/>
        </authorList>
    </citation>
    <scope>PHOSPHORYLATION [LARGE SCALE ANALYSIS] AT SER-59</scope>
    <scope>IDENTIFICATION BY MASS SPECTROMETRY [LARGE SCALE ANALYSIS]</scope>
</reference>
<gene>
    <name type="primary">Gclm</name>
    <name type="synonym">Glclr</name>
</gene>
<comment type="pathway">
    <text>Sulfur metabolism; glutathione biosynthesis; glutathione from L-cysteine and L-glutamate: step 1/2.</text>
</comment>
<comment type="subunit">
    <text>Heterodimer of a catalytic heavy chain and a regulatory light chain.</text>
</comment>
<comment type="tissue specificity">
    <text>Most abundant in kidney. Also found in liver and testis.</text>
</comment>
<comment type="similarity">
    <text evidence="2">Belongs to the aldo/keto reductase family. Glutamate--cysteine ligase light chain subfamily.</text>
</comment>
<evidence type="ECO:0000250" key="1">
    <source>
        <dbReference type="UniProtKB" id="P48507"/>
    </source>
</evidence>
<evidence type="ECO:0000305" key="2"/>
<evidence type="ECO:0007744" key="3">
    <source>
    </source>
</evidence>
<name>GSH0_RAT</name>
<accession>P48508</accession>